<comment type="function">
    <text evidence="1">Involved in the biosynthesis of lipid A, a phosphorylated glycolipid that anchors the lipopolysaccharide to the outer membrane of the cell.</text>
</comment>
<comment type="catalytic activity">
    <reaction evidence="1">
        <text>a (3R)-hydroxyacyl-[ACP] + UDP-N-acetyl-alpha-D-glucosamine = a UDP-3-O-[(3R)-3-hydroxyacyl]-N-acetyl-alpha-D-glucosamine + holo-[ACP]</text>
        <dbReference type="Rhea" id="RHEA:67812"/>
        <dbReference type="Rhea" id="RHEA-COMP:9685"/>
        <dbReference type="Rhea" id="RHEA-COMP:9945"/>
        <dbReference type="ChEBI" id="CHEBI:57705"/>
        <dbReference type="ChEBI" id="CHEBI:64479"/>
        <dbReference type="ChEBI" id="CHEBI:78827"/>
        <dbReference type="ChEBI" id="CHEBI:173225"/>
        <dbReference type="EC" id="2.3.1.129"/>
    </reaction>
</comment>
<comment type="pathway">
    <text evidence="1">Glycolipid biosynthesis; lipid IV(A) biosynthesis; lipid IV(A) from (3R)-3-hydroxytetradecanoyl-[acyl-carrier-protein] and UDP-N-acetyl-alpha-D-glucosamine: step 1/6.</text>
</comment>
<comment type="subunit">
    <text evidence="1">Homotrimer.</text>
</comment>
<comment type="subcellular location">
    <subcellularLocation>
        <location evidence="1">Cytoplasm</location>
    </subcellularLocation>
</comment>
<comment type="similarity">
    <text evidence="1">Belongs to the transferase hexapeptide repeat family. LpxA subfamily.</text>
</comment>
<feature type="chain" id="PRO_0000302598" description="Acyl-[acyl-carrier-protein]--UDP-N-acetylglucosamine O-acyltransferase">
    <location>
        <begin position="1"/>
        <end position="258"/>
    </location>
</feature>
<dbReference type="EC" id="2.3.1.129" evidence="1"/>
<dbReference type="EMBL" id="CP000282">
    <property type="protein sequence ID" value="ABD81845.1"/>
    <property type="molecule type" value="Genomic_DNA"/>
</dbReference>
<dbReference type="RefSeq" id="WP_011469062.1">
    <property type="nucleotide sequence ID" value="NC_007912.1"/>
</dbReference>
<dbReference type="SMR" id="Q21HI4"/>
<dbReference type="STRING" id="203122.Sde_2585"/>
<dbReference type="GeneID" id="98614248"/>
<dbReference type="KEGG" id="sde:Sde_2585"/>
<dbReference type="eggNOG" id="COG1043">
    <property type="taxonomic scope" value="Bacteria"/>
</dbReference>
<dbReference type="HOGENOM" id="CLU_061249_0_0_6"/>
<dbReference type="OrthoDB" id="9807278at2"/>
<dbReference type="UniPathway" id="UPA00359">
    <property type="reaction ID" value="UER00477"/>
</dbReference>
<dbReference type="Proteomes" id="UP000001947">
    <property type="component" value="Chromosome"/>
</dbReference>
<dbReference type="GO" id="GO:0005737">
    <property type="term" value="C:cytoplasm"/>
    <property type="evidence" value="ECO:0007669"/>
    <property type="project" value="UniProtKB-SubCell"/>
</dbReference>
<dbReference type="GO" id="GO:0016020">
    <property type="term" value="C:membrane"/>
    <property type="evidence" value="ECO:0007669"/>
    <property type="project" value="GOC"/>
</dbReference>
<dbReference type="GO" id="GO:0008780">
    <property type="term" value="F:acyl-[acyl-carrier-protein]-UDP-N-acetylglucosamine O-acyltransferase activity"/>
    <property type="evidence" value="ECO:0007669"/>
    <property type="project" value="UniProtKB-UniRule"/>
</dbReference>
<dbReference type="GO" id="GO:0009245">
    <property type="term" value="P:lipid A biosynthetic process"/>
    <property type="evidence" value="ECO:0007669"/>
    <property type="project" value="UniProtKB-UniRule"/>
</dbReference>
<dbReference type="CDD" id="cd03351">
    <property type="entry name" value="LbH_UDP-GlcNAc_AT"/>
    <property type="match status" value="1"/>
</dbReference>
<dbReference type="FunFam" id="2.160.10.10:FF:000003">
    <property type="entry name" value="Acyl-[acyl-carrier-protein]--UDP-N-acetylglucosamine O-acyltransferase"/>
    <property type="match status" value="1"/>
</dbReference>
<dbReference type="Gene3D" id="2.160.10.10">
    <property type="entry name" value="Hexapeptide repeat proteins"/>
    <property type="match status" value="1"/>
</dbReference>
<dbReference type="Gene3D" id="1.20.1180.10">
    <property type="entry name" value="Udp N-acetylglucosamine O-acyltransferase, C-terminal domain"/>
    <property type="match status" value="1"/>
</dbReference>
<dbReference type="HAMAP" id="MF_00387">
    <property type="entry name" value="LpxA"/>
    <property type="match status" value="1"/>
</dbReference>
<dbReference type="InterPro" id="IPR029098">
    <property type="entry name" value="Acetyltransf_C"/>
</dbReference>
<dbReference type="InterPro" id="IPR037157">
    <property type="entry name" value="Acetyltransf_C_sf"/>
</dbReference>
<dbReference type="InterPro" id="IPR001451">
    <property type="entry name" value="Hexapep"/>
</dbReference>
<dbReference type="InterPro" id="IPR010137">
    <property type="entry name" value="Lipid_A_LpxA"/>
</dbReference>
<dbReference type="InterPro" id="IPR011004">
    <property type="entry name" value="Trimer_LpxA-like_sf"/>
</dbReference>
<dbReference type="NCBIfam" id="TIGR01852">
    <property type="entry name" value="lipid_A_lpxA"/>
    <property type="match status" value="1"/>
</dbReference>
<dbReference type="NCBIfam" id="NF003657">
    <property type="entry name" value="PRK05289.1"/>
    <property type="match status" value="1"/>
</dbReference>
<dbReference type="PANTHER" id="PTHR43480">
    <property type="entry name" value="ACYL-[ACYL-CARRIER-PROTEIN]--UDP-N-ACETYLGLUCOSAMINE O-ACYLTRANSFERASE"/>
    <property type="match status" value="1"/>
</dbReference>
<dbReference type="PANTHER" id="PTHR43480:SF1">
    <property type="entry name" value="ACYL-[ACYL-CARRIER-PROTEIN]--UDP-N-ACETYLGLUCOSAMINE O-ACYLTRANSFERASE, MITOCHONDRIAL-RELATED"/>
    <property type="match status" value="1"/>
</dbReference>
<dbReference type="Pfam" id="PF13720">
    <property type="entry name" value="Acetyltransf_11"/>
    <property type="match status" value="1"/>
</dbReference>
<dbReference type="Pfam" id="PF00132">
    <property type="entry name" value="Hexapep"/>
    <property type="match status" value="2"/>
</dbReference>
<dbReference type="PIRSF" id="PIRSF000456">
    <property type="entry name" value="UDP-GlcNAc_acltr"/>
    <property type="match status" value="1"/>
</dbReference>
<dbReference type="SUPFAM" id="SSF51161">
    <property type="entry name" value="Trimeric LpxA-like enzymes"/>
    <property type="match status" value="1"/>
</dbReference>
<organism>
    <name type="scientific">Saccharophagus degradans (strain 2-40 / ATCC 43961 / DSM 17024)</name>
    <dbReference type="NCBI Taxonomy" id="203122"/>
    <lineage>
        <taxon>Bacteria</taxon>
        <taxon>Pseudomonadati</taxon>
        <taxon>Pseudomonadota</taxon>
        <taxon>Gammaproteobacteria</taxon>
        <taxon>Cellvibrionales</taxon>
        <taxon>Cellvibrionaceae</taxon>
        <taxon>Saccharophagus</taxon>
    </lineage>
</organism>
<name>LPXA_SACD2</name>
<protein>
    <recommendedName>
        <fullName evidence="1">Acyl-[acyl-carrier-protein]--UDP-N-acetylglucosamine O-acyltransferase</fullName>
        <shortName evidence="1">UDP-N-acetylglucosamine acyltransferase</shortName>
        <ecNumber evidence="1">2.3.1.129</ecNumber>
    </recommendedName>
</protein>
<sequence length="258" mass="27576">MTFIHPTAIVDPAAKLADDVKVGPWTYIGEGVEIGAGSVIESHVVLKGPTQIGCNNHIYQFSSVGEATPDLKYKGEPTKLIIGDNNIIREGVTLHRGTVQDRGETRIGNNNLLMAYVHVGHDSVVGNHCILVNNAALAGHVIVDDYAILGGFTLVHQFSRIGAYSFTGMGSAVGKDIPAFMMVAGAPAAARSINMEGLKRRGFSKDDIAKLNKSFKLIYRRGLTLEAAIEELTPLAQDCAAIVTLIASLRASKRGIVR</sequence>
<reference key="1">
    <citation type="journal article" date="2008" name="PLoS Genet.">
        <title>Complete genome sequence of the complex carbohydrate-degrading marine bacterium, Saccharophagus degradans strain 2-40 T.</title>
        <authorList>
            <person name="Weiner R.M."/>
            <person name="Taylor L.E. II"/>
            <person name="Henrissat B."/>
            <person name="Hauser L."/>
            <person name="Land M."/>
            <person name="Coutinho P.M."/>
            <person name="Rancurel C."/>
            <person name="Saunders E.H."/>
            <person name="Longmire A.G."/>
            <person name="Zhang H."/>
            <person name="Bayer E.A."/>
            <person name="Gilbert H.J."/>
            <person name="Larimer F."/>
            <person name="Zhulin I.B."/>
            <person name="Ekborg N.A."/>
            <person name="Lamed R."/>
            <person name="Richardson P.M."/>
            <person name="Borovok I."/>
            <person name="Hutcheson S."/>
        </authorList>
    </citation>
    <scope>NUCLEOTIDE SEQUENCE [LARGE SCALE GENOMIC DNA]</scope>
    <source>
        <strain>2-40 / ATCC 43961 / DSM 17024</strain>
    </source>
</reference>
<evidence type="ECO:0000255" key="1">
    <source>
        <dbReference type="HAMAP-Rule" id="MF_00387"/>
    </source>
</evidence>
<keyword id="KW-0012">Acyltransferase</keyword>
<keyword id="KW-0963">Cytoplasm</keyword>
<keyword id="KW-0441">Lipid A biosynthesis</keyword>
<keyword id="KW-0444">Lipid biosynthesis</keyword>
<keyword id="KW-0443">Lipid metabolism</keyword>
<keyword id="KW-1185">Reference proteome</keyword>
<keyword id="KW-0677">Repeat</keyword>
<keyword id="KW-0808">Transferase</keyword>
<proteinExistence type="inferred from homology"/>
<gene>
    <name evidence="1" type="primary">lpxA</name>
    <name type="ordered locus">Sde_2585</name>
</gene>
<accession>Q21HI4</accession>